<protein>
    <recommendedName>
        <fullName>Tyrosine-protein kinase transforming protein Src</fullName>
        <ecNumber>2.7.10.2</ecNumber>
    </recommendedName>
    <alternativeName>
        <fullName>pp60v-src</fullName>
        <shortName>p60-Src</shortName>
        <shortName>v-Src</shortName>
    </alternativeName>
</protein>
<dbReference type="EC" id="2.7.10.2"/>
<dbReference type="EMBL" id="X15345">
    <property type="protein sequence ID" value="CAA33404.1"/>
    <property type="molecule type" value="mRNA"/>
</dbReference>
<dbReference type="PIR" id="S09609">
    <property type="entry name" value="OKFVYR"/>
</dbReference>
<dbReference type="SMR" id="P25020"/>
<dbReference type="IntAct" id="P25020">
    <property type="interactions" value="1"/>
</dbReference>
<dbReference type="MINT" id="P25020"/>
<dbReference type="iPTMnet" id="P25020"/>
<dbReference type="BRENDA" id="2.7.10.2">
    <property type="organism ID" value="5464"/>
</dbReference>
<dbReference type="GO" id="GO:0005524">
    <property type="term" value="F:ATP binding"/>
    <property type="evidence" value="ECO:0007669"/>
    <property type="project" value="UniProtKB-KW"/>
</dbReference>
<dbReference type="GO" id="GO:0046872">
    <property type="term" value="F:metal ion binding"/>
    <property type="evidence" value="ECO:0007669"/>
    <property type="project" value="UniProtKB-KW"/>
</dbReference>
<dbReference type="GO" id="GO:0004715">
    <property type="term" value="F:non-membrane spanning protein tyrosine kinase activity"/>
    <property type="evidence" value="ECO:0007669"/>
    <property type="project" value="UniProtKB-EC"/>
</dbReference>
<dbReference type="CDD" id="cd12008">
    <property type="entry name" value="SH3_Src"/>
    <property type="match status" value="1"/>
</dbReference>
<dbReference type="FunFam" id="1.10.510.10:FF:000553">
    <property type="entry name" value="Tyrosine-protein kinase"/>
    <property type="match status" value="1"/>
</dbReference>
<dbReference type="FunFam" id="2.30.30.40:FF:000083">
    <property type="entry name" value="Tyrosine-protein kinase"/>
    <property type="match status" value="1"/>
</dbReference>
<dbReference type="FunFam" id="3.30.200.20:FF:000016">
    <property type="entry name" value="Tyrosine-protein kinase"/>
    <property type="match status" value="1"/>
</dbReference>
<dbReference type="FunFam" id="3.30.505.10:FF:000001">
    <property type="entry name" value="Tyrosine-protein kinase"/>
    <property type="match status" value="1"/>
</dbReference>
<dbReference type="Gene3D" id="3.30.200.20">
    <property type="entry name" value="Phosphorylase Kinase, domain 1"/>
    <property type="match status" value="1"/>
</dbReference>
<dbReference type="Gene3D" id="3.30.505.10">
    <property type="entry name" value="SH2 domain"/>
    <property type="match status" value="1"/>
</dbReference>
<dbReference type="Gene3D" id="2.30.30.40">
    <property type="entry name" value="SH3 Domains"/>
    <property type="match status" value="1"/>
</dbReference>
<dbReference type="Gene3D" id="1.10.510.10">
    <property type="entry name" value="Transferase(Phosphotransferase) domain 1"/>
    <property type="match status" value="1"/>
</dbReference>
<dbReference type="InterPro" id="IPR011009">
    <property type="entry name" value="Kinase-like_dom_sf"/>
</dbReference>
<dbReference type="InterPro" id="IPR050198">
    <property type="entry name" value="Non-receptor_tyrosine_kinases"/>
</dbReference>
<dbReference type="InterPro" id="IPR000719">
    <property type="entry name" value="Prot_kinase_dom"/>
</dbReference>
<dbReference type="InterPro" id="IPR017441">
    <property type="entry name" value="Protein_kinase_ATP_BS"/>
</dbReference>
<dbReference type="InterPro" id="IPR001245">
    <property type="entry name" value="Ser-Thr/Tyr_kinase_cat_dom"/>
</dbReference>
<dbReference type="InterPro" id="IPR000980">
    <property type="entry name" value="SH2"/>
</dbReference>
<dbReference type="InterPro" id="IPR036860">
    <property type="entry name" value="SH2_dom_sf"/>
</dbReference>
<dbReference type="InterPro" id="IPR036028">
    <property type="entry name" value="SH3-like_dom_sf"/>
</dbReference>
<dbReference type="InterPro" id="IPR001452">
    <property type="entry name" value="SH3_domain"/>
</dbReference>
<dbReference type="InterPro" id="IPR008266">
    <property type="entry name" value="Tyr_kinase_AS"/>
</dbReference>
<dbReference type="InterPro" id="IPR020635">
    <property type="entry name" value="Tyr_kinase_cat_dom"/>
</dbReference>
<dbReference type="PANTHER" id="PTHR24418">
    <property type="entry name" value="TYROSINE-PROTEIN KINASE"/>
    <property type="match status" value="1"/>
</dbReference>
<dbReference type="Pfam" id="PF07714">
    <property type="entry name" value="PK_Tyr_Ser-Thr"/>
    <property type="match status" value="1"/>
</dbReference>
<dbReference type="Pfam" id="PF00017">
    <property type="entry name" value="SH2"/>
    <property type="match status" value="1"/>
</dbReference>
<dbReference type="Pfam" id="PF00018">
    <property type="entry name" value="SH3_1"/>
    <property type="match status" value="1"/>
</dbReference>
<dbReference type="PRINTS" id="PR00401">
    <property type="entry name" value="SH2DOMAIN"/>
</dbReference>
<dbReference type="PRINTS" id="PR00452">
    <property type="entry name" value="SH3DOMAIN"/>
</dbReference>
<dbReference type="PRINTS" id="PR00109">
    <property type="entry name" value="TYRKINASE"/>
</dbReference>
<dbReference type="SMART" id="SM00252">
    <property type="entry name" value="SH2"/>
    <property type="match status" value="1"/>
</dbReference>
<dbReference type="SMART" id="SM00326">
    <property type="entry name" value="SH3"/>
    <property type="match status" value="1"/>
</dbReference>
<dbReference type="SMART" id="SM00219">
    <property type="entry name" value="TyrKc"/>
    <property type="match status" value="1"/>
</dbReference>
<dbReference type="SUPFAM" id="SSF56112">
    <property type="entry name" value="Protein kinase-like (PK-like)"/>
    <property type="match status" value="1"/>
</dbReference>
<dbReference type="SUPFAM" id="SSF55550">
    <property type="entry name" value="SH2 domain"/>
    <property type="match status" value="1"/>
</dbReference>
<dbReference type="SUPFAM" id="SSF50044">
    <property type="entry name" value="SH3-domain"/>
    <property type="match status" value="1"/>
</dbReference>
<dbReference type="PROSITE" id="PS00107">
    <property type="entry name" value="PROTEIN_KINASE_ATP"/>
    <property type="match status" value="1"/>
</dbReference>
<dbReference type="PROSITE" id="PS50011">
    <property type="entry name" value="PROTEIN_KINASE_DOM"/>
    <property type="match status" value="1"/>
</dbReference>
<dbReference type="PROSITE" id="PS00109">
    <property type="entry name" value="PROTEIN_KINASE_TYR"/>
    <property type="match status" value="1"/>
</dbReference>
<dbReference type="PROSITE" id="PS50001">
    <property type="entry name" value="SH2"/>
    <property type="match status" value="1"/>
</dbReference>
<dbReference type="PROSITE" id="PS50002">
    <property type="entry name" value="SH3"/>
    <property type="match status" value="1"/>
</dbReference>
<reference key="1">
    <citation type="journal article" date="1989" name="Nucleic Acids Res.">
        <title>Complete nucleotide sequence of LTR, v-src, LTR provirus H-19.</title>
        <authorList>
            <person name="Bodor J."/>
            <person name="Poliak E."/>
            <person name="Pichrtova J."/>
            <person name="Geryk J."/>
            <person name="Svoboda J."/>
        </authorList>
    </citation>
    <scope>NUCLEOTIDE SEQUENCE [MRNA]</scope>
</reference>
<reference key="2">
    <citation type="journal article" date="1989" name="Biochem. Biophys. Res. Commun.">
        <title>Antibodies to an NH2-terminal myristoyl glycine moiety can detect NH2-terminal myristoylated proteins in the retrovirus-infected cells.</title>
        <authorList>
            <person name="Shoji S."/>
            <person name="Tashiro A."/>
            <person name="Furuishi K."/>
            <person name="Takenaka O."/>
            <person name="Kida Y."/>
            <person name="Horiuchi S."/>
            <person name="Funakoshi T."/>
            <person name="Kubota Y."/>
        </authorList>
    </citation>
    <scope>PROTEIN SEQUENCE OF 2-9</scope>
    <scope>MYRISTOYLATION AT GLY-2</scope>
    <source>
        <strain>Isolate tsNY68</strain>
    </source>
</reference>
<name>SRC_RSVH1</name>
<gene>
    <name type="primary">V-SRC</name>
</gene>
<comment type="function">
    <text>This phosphoprotein, required for both the initiation and the maintenance of neoplastic transformation, is a protein kinase that catalyzes the phosphorylation of tyrosine residues in vitro.</text>
</comment>
<comment type="catalytic activity">
    <reaction evidence="5">
        <text>L-tyrosyl-[protein] + ATP = O-phospho-L-tyrosyl-[protein] + ADP + H(+)</text>
        <dbReference type="Rhea" id="RHEA:10596"/>
        <dbReference type="Rhea" id="RHEA-COMP:10136"/>
        <dbReference type="Rhea" id="RHEA-COMP:20101"/>
        <dbReference type="ChEBI" id="CHEBI:15378"/>
        <dbReference type="ChEBI" id="CHEBI:30616"/>
        <dbReference type="ChEBI" id="CHEBI:46858"/>
        <dbReference type="ChEBI" id="CHEBI:61978"/>
        <dbReference type="ChEBI" id="CHEBI:456216"/>
        <dbReference type="EC" id="2.7.10.2"/>
    </reaction>
</comment>
<comment type="cofactor">
    <cofactor evidence="1">
        <name>Mn(2+)</name>
        <dbReference type="ChEBI" id="CHEBI:29035"/>
    </cofactor>
</comment>
<comment type="interaction">
    <interactant intactId="EBI-8636140">
        <id>P25020</id>
    </interactant>
    <interactant intactId="EBI-641237">
        <id>P09619</id>
        <label>PDGFRB</label>
    </interactant>
    <organismsDiffer>true</organismsDiffer>
    <experiments>4</experiments>
</comment>
<comment type="PTM">
    <text>The phosphorylated form is termed pp60v-src.</text>
</comment>
<comment type="similarity">
    <text evidence="2">Belongs to the protein kinase superfamily. Tyr protein kinase family. SRC subfamily.</text>
</comment>
<evidence type="ECO:0000250" key="1"/>
<evidence type="ECO:0000255" key="2">
    <source>
        <dbReference type="PROSITE-ProRule" id="PRU00159"/>
    </source>
</evidence>
<evidence type="ECO:0000255" key="3">
    <source>
        <dbReference type="PROSITE-ProRule" id="PRU00191"/>
    </source>
</evidence>
<evidence type="ECO:0000255" key="4">
    <source>
        <dbReference type="PROSITE-ProRule" id="PRU00192"/>
    </source>
</evidence>
<evidence type="ECO:0000255" key="5">
    <source>
        <dbReference type="PROSITE-ProRule" id="PRU10028"/>
    </source>
</evidence>
<evidence type="ECO:0000256" key="6">
    <source>
        <dbReference type="SAM" id="MobiDB-lite"/>
    </source>
</evidence>
<evidence type="ECO:0000269" key="7">
    <source>
    </source>
</evidence>
<proteinExistence type="evidence at protein level"/>
<sequence>MGSSKSKPKDPSQRRRSLEPPDSTHHGGFPASQTPDETAAPDAHRNPSRSFGTVATEPKLFWGFNTSDTVTSPQRAGALAGGVTTFVALYDYESWTETDLSFKKGERLQIVNNTEGDWWLAHSLTTGQTGYIPSNYVAPSDSIQAEEWYFGKITRRESERLLLNPENPRGTFLVRKSETAKGAYCLSVSDFDNAKGPNVKHYKICKLYSGGFYITSRTQFGSLQQLVAYYSKHADGLCHRLTNVCPTSKPQTQGLAKDAWEIPRESLRLEAKLGQGCFGEVWMGTWNGTTRVAIKTLKPGTMSPEAFLQEAQVMKKLRHEKLVQLYAVVSEEPIYIVIEYMSKGSLLDFLKGEMGKYLRLPQLVDMAAQIASGMAYVERMNYVHRDLRAANILVGENLVCKVADFGLARLIEDNEYTARQGAKFPIKWTAPEAALYGRFTIKSDVWSFGILLTELTTKGRVPYPGMVNREVLDQVERAYRMPCPPECPESLHDLMCQCWRKDPEERPTFKYLQAQLLPACVLEVAE</sequence>
<organismHost>
    <name type="scientific">Gallus gallus</name>
    <name type="common">Chicken</name>
    <dbReference type="NCBI Taxonomy" id="9031"/>
</organismHost>
<accession>P25020</accession>
<keyword id="KW-0067">ATP-binding</keyword>
<keyword id="KW-0903">Direct protein sequencing</keyword>
<keyword id="KW-0418">Kinase</keyword>
<keyword id="KW-0449">Lipoprotein</keyword>
<keyword id="KW-0464">Manganese</keyword>
<keyword id="KW-0479">Metal-binding</keyword>
<keyword id="KW-0519">Myristate</keyword>
<keyword id="KW-0547">Nucleotide-binding</keyword>
<keyword id="KW-0597">Phosphoprotein</keyword>
<keyword id="KW-0727">SH2 domain</keyword>
<keyword id="KW-0728">SH3 domain</keyword>
<keyword id="KW-0808">Transferase</keyword>
<keyword id="KW-0829">Tyrosine-protein kinase</keyword>
<organism>
    <name type="scientific">Rous sarcoma virus (strain H-19)</name>
    <dbReference type="NCBI Taxonomy" id="11887"/>
    <lineage>
        <taxon>Viruses</taxon>
        <taxon>Riboviria</taxon>
        <taxon>Pararnavirae</taxon>
        <taxon>Artverviricota</taxon>
        <taxon>Revtraviricetes</taxon>
        <taxon>Ortervirales</taxon>
        <taxon>Retroviridae</taxon>
        <taxon>Orthoretrovirinae</taxon>
        <taxon>Alpharetrovirus</taxon>
        <taxon>Rous sarcoma virus</taxon>
    </lineage>
</organism>
<feature type="initiator methionine" description="Removed; by host" evidence="1">
    <location>
        <position position="1"/>
    </location>
</feature>
<feature type="chain" id="PRO_0000088155" description="Tyrosine-protein kinase transforming protein Src">
    <location>
        <begin position="2"/>
        <end position="526"/>
    </location>
</feature>
<feature type="domain" description="SH3" evidence="4">
    <location>
        <begin position="81"/>
        <end position="142"/>
    </location>
</feature>
<feature type="domain" description="SH2" evidence="3">
    <location>
        <begin position="148"/>
        <end position="245"/>
    </location>
</feature>
<feature type="domain" description="Protein kinase" evidence="2">
    <location>
        <begin position="267"/>
        <end position="517"/>
    </location>
</feature>
<feature type="region of interest" description="Disordered" evidence="6">
    <location>
        <begin position="1"/>
        <end position="52"/>
    </location>
</feature>
<feature type="compositionally biased region" description="Basic and acidic residues" evidence="6">
    <location>
        <begin position="7"/>
        <end position="25"/>
    </location>
</feature>
<feature type="active site" description="Proton acceptor" evidence="2 5">
    <location>
        <position position="386"/>
    </location>
</feature>
<feature type="binding site" evidence="2">
    <location>
        <begin position="273"/>
        <end position="281"/>
    </location>
    <ligand>
        <name>ATP</name>
        <dbReference type="ChEBI" id="CHEBI:30616"/>
    </ligand>
</feature>
<feature type="binding site" evidence="2">
    <location>
        <position position="295"/>
    </location>
    <ligand>
        <name>ATP</name>
        <dbReference type="ChEBI" id="CHEBI:30616"/>
    </ligand>
</feature>
<feature type="modified residue" description="Phosphotyrosine; by autocatalysis" evidence="1">
    <location>
        <position position="416"/>
    </location>
</feature>
<feature type="lipid moiety-binding region" description="N-myristoyl glycine; by host" evidence="7">
    <location>
        <position position="2"/>
    </location>
</feature>